<keyword id="KW-1003">Cell membrane</keyword>
<keyword id="KW-0472">Membrane</keyword>
<keyword id="KW-0653">Protein transport</keyword>
<keyword id="KW-1185">Reference proteome</keyword>
<keyword id="KW-0811">Translocation</keyword>
<keyword id="KW-0812">Transmembrane</keyword>
<keyword id="KW-1133">Transmembrane helix</keyword>
<keyword id="KW-0813">Transport</keyword>
<organism>
    <name type="scientific">Bacillus cereus (strain ATCC 14579 / DSM 31 / CCUG 7414 / JCM 2152 / NBRC 15305 / NCIMB 9373 / NCTC 2599 / NRRL B-3711)</name>
    <dbReference type="NCBI Taxonomy" id="226900"/>
    <lineage>
        <taxon>Bacteria</taxon>
        <taxon>Bacillati</taxon>
        <taxon>Bacillota</taxon>
        <taxon>Bacilli</taxon>
        <taxon>Bacillales</taxon>
        <taxon>Bacillaceae</taxon>
        <taxon>Bacillus</taxon>
        <taxon>Bacillus cereus group</taxon>
    </lineage>
</organism>
<proteinExistence type="inferred from homology"/>
<feature type="chain" id="PRO_1000058951" description="Sec-independent protein translocase protein TatA">
    <location>
        <begin position="1"/>
        <end position="61"/>
    </location>
</feature>
<feature type="transmembrane region" description="Helical" evidence="1">
    <location>
        <begin position="1"/>
        <end position="21"/>
    </location>
</feature>
<protein>
    <recommendedName>
        <fullName evidence="1">Sec-independent protein translocase protein TatA</fullName>
    </recommendedName>
</protein>
<accession>Q81DZ9</accession>
<gene>
    <name evidence="1" type="primary">tatA</name>
    <name type="ordered locus">BC_2197</name>
</gene>
<dbReference type="EMBL" id="AE016877">
    <property type="protein sequence ID" value="AAP09163.1"/>
    <property type="molecule type" value="Genomic_DNA"/>
</dbReference>
<dbReference type="RefSeq" id="NP_831962.1">
    <property type="nucleotide sequence ID" value="NC_004722.1"/>
</dbReference>
<dbReference type="RefSeq" id="WP_000492443.1">
    <property type="nucleotide sequence ID" value="NZ_CP138336.1"/>
</dbReference>
<dbReference type="SMR" id="Q81DZ9"/>
<dbReference type="STRING" id="226900.BC_2197"/>
<dbReference type="KEGG" id="bce:BC2197"/>
<dbReference type="PATRIC" id="fig|226900.8.peg.2219"/>
<dbReference type="HOGENOM" id="CLU_086034_6_0_9"/>
<dbReference type="OrthoDB" id="9800908at2"/>
<dbReference type="PRO" id="PR:Q81DZ9"/>
<dbReference type="Proteomes" id="UP000001417">
    <property type="component" value="Chromosome"/>
</dbReference>
<dbReference type="GO" id="GO:0033281">
    <property type="term" value="C:TAT protein transport complex"/>
    <property type="evidence" value="ECO:0007669"/>
    <property type="project" value="UniProtKB-UniRule"/>
</dbReference>
<dbReference type="GO" id="GO:0008320">
    <property type="term" value="F:protein transmembrane transporter activity"/>
    <property type="evidence" value="ECO:0007669"/>
    <property type="project" value="UniProtKB-UniRule"/>
</dbReference>
<dbReference type="GO" id="GO:0043953">
    <property type="term" value="P:protein transport by the Tat complex"/>
    <property type="evidence" value="ECO:0007669"/>
    <property type="project" value="UniProtKB-UniRule"/>
</dbReference>
<dbReference type="Gene3D" id="1.20.5.3310">
    <property type="match status" value="1"/>
</dbReference>
<dbReference type="HAMAP" id="MF_00236">
    <property type="entry name" value="TatA_E"/>
    <property type="match status" value="1"/>
</dbReference>
<dbReference type="InterPro" id="IPR003369">
    <property type="entry name" value="TatA/B/E"/>
</dbReference>
<dbReference type="InterPro" id="IPR006312">
    <property type="entry name" value="TatA/E"/>
</dbReference>
<dbReference type="NCBIfam" id="NF011430">
    <property type="entry name" value="PRK14861.1"/>
    <property type="match status" value="1"/>
</dbReference>
<dbReference type="NCBIfam" id="TIGR01411">
    <property type="entry name" value="tatAE"/>
    <property type="match status" value="1"/>
</dbReference>
<dbReference type="PANTHER" id="PTHR42982">
    <property type="entry name" value="SEC-INDEPENDENT PROTEIN TRANSLOCASE PROTEIN TATA"/>
    <property type="match status" value="1"/>
</dbReference>
<dbReference type="PANTHER" id="PTHR42982:SF1">
    <property type="entry name" value="SEC-INDEPENDENT PROTEIN TRANSLOCASE PROTEIN TATA"/>
    <property type="match status" value="1"/>
</dbReference>
<dbReference type="Pfam" id="PF02416">
    <property type="entry name" value="TatA_B_E"/>
    <property type="match status" value="1"/>
</dbReference>
<dbReference type="PRINTS" id="PR01506">
    <property type="entry name" value="TATBPROTEIN"/>
</dbReference>
<name>TATA_BACCR</name>
<evidence type="ECO:0000255" key="1">
    <source>
        <dbReference type="HAMAP-Rule" id="MF_00236"/>
    </source>
</evidence>
<sequence>MFSNIGFPGLILILVAVLILFGPKKLPEIGKALGETLKEFKKSTKELTDDAFQEKEKKEKM</sequence>
<reference key="1">
    <citation type="journal article" date="2003" name="Nature">
        <title>Genome sequence of Bacillus cereus and comparative analysis with Bacillus anthracis.</title>
        <authorList>
            <person name="Ivanova N."/>
            <person name="Sorokin A."/>
            <person name="Anderson I."/>
            <person name="Galleron N."/>
            <person name="Candelon B."/>
            <person name="Kapatral V."/>
            <person name="Bhattacharyya A."/>
            <person name="Reznik G."/>
            <person name="Mikhailova N."/>
            <person name="Lapidus A."/>
            <person name="Chu L."/>
            <person name="Mazur M."/>
            <person name="Goltsman E."/>
            <person name="Larsen N."/>
            <person name="D'Souza M."/>
            <person name="Walunas T."/>
            <person name="Grechkin Y."/>
            <person name="Pusch G."/>
            <person name="Haselkorn R."/>
            <person name="Fonstein M."/>
            <person name="Ehrlich S.D."/>
            <person name="Overbeek R."/>
            <person name="Kyrpides N.C."/>
        </authorList>
    </citation>
    <scope>NUCLEOTIDE SEQUENCE [LARGE SCALE GENOMIC DNA]</scope>
    <source>
        <strain>ATCC 14579 / DSM 31 / CCUG 7414 / JCM 2152 / NBRC 15305 / NCIMB 9373 / NCTC 2599 / NRRL B-3711</strain>
    </source>
</reference>
<comment type="function">
    <text evidence="1">Part of the twin-arginine translocation (Tat) system that transports large folded proteins containing a characteristic twin-arginine motif in their signal peptide across membranes. TatA could form the protein-conducting channel of the Tat system.</text>
</comment>
<comment type="subunit">
    <text evidence="1">Forms a complex with TatC.</text>
</comment>
<comment type="subcellular location">
    <subcellularLocation>
        <location evidence="1">Cell membrane</location>
        <topology evidence="1">Single-pass membrane protein</topology>
    </subcellularLocation>
</comment>
<comment type="similarity">
    <text evidence="1">Belongs to the TatA/E family.</text>
</comment>